<dbReference type="EC" id="3.6.5.2" evidence="3"/>
<dbReference type="EMBL" id="BC088443">
    <property type="protein sequence ID" value="AAH88443.1"/>
    <property type="molecule type" value="mRNA"/>
</dbReference>
<dbReference type="RefSeq" id="NP_001019497.1">
    <property type="nucleotide sequence ID" value="NM_001024326.1"/>
</dbReference>
<dbReference type="RefSeq" id="XP_008761042.1">
    <property type="nucleotide sequence ID" value="XM_008762820.1"/>
</dbReference>
<dbReference type="SMR" id="Q5M7U5"/>
<dbReference type="FunCoup" id="Q5M7U5">
    <property type="interactions" value="128"/>
</dbReference>
<dbReference type="STRING" id="10116.ENSRNOP00000012280"/>
<dbReference type="PhosphoSitePlus" id="Q5M7U5"/>
<dbReference type="PaxDb" id="10116-ENSRNOP00000012280"/>
<dbReference type="GeneID" id="500088"/>
<dbReference type="KEGG" id="rno:500088"/>
<dbReference type="UCSC" id="RGD:1565263">
    <property type="organism name" value="rat"/>
</dbReference>
<dbReference type="AGR" id="RGD:1565263"/>
<dbReference type="CTD" id="401409"/>
<dbReference type="RGD" id="1565263">
    <property type="gene designation" value="Rab19"/>
</dbReference>
<dbReference type="VEuPathDB" id="HostDB:ENSRNOG00000009030"/>
<dbReference type="eggNOG" id="KOG0084">
    <property type="taxonomic scope" value="Eukaryota"/>
</dbReference>
<dbReference type="HOGENOM" id="CLU_041217_23_1_1"/>
<dbReference type="InParanoid" id="Q5M7U5"/>
<dbReference type="OrthoDB" id="19576at9989"/>
<dbReference type="PhylomeDB" id="Q5M7U5"/>
<dbReference type="TreeFam" id="TF300097"/>
<dbReference type="Reactome" id="R-RNO-8873719">
    <property type="pathway name" value="RAB geranylgeranylation"/>
</dbReference>
<dbReference type="PRO" id="PR:Q5M7U5"/>
<dbReference type="Proteomes" id="UP000002494">
    <property type="component" value="Chromosome 4"/>
</dbReference>
<dbReference type="Bgee" id="ENSRNOG00000009030">
    <property type="expression patterns" value="Expressed in thymus and 13 other cell types or tissues"/>
</dbReference>
<dbReference type="GO" id="GO:0012505">
    <property type="term" value="C:endomembrane system"/>
    <property type="evidence" value="ECO:0000318"/>
    <property type="project" value="GO_Central"/>
</dbReference>
<dbReference type="GO" id="GO:0005886">
    <property type="term" value="C:plasma membrane"/>
    <property type="evidence" value="ECO:0007669"/>
    <property type="project" value="UniProtKB-SubCell"/>
</dbReference>
<dbReference type="GO" id="GO:0030672">
    <property type="term" value="C:synaptic vesicle membrane"/>
    <property type="evidence" value="ECO:0007669"/>
    <property type="project" value="UniProtKB-ARBA"/>
</dbReference>
<dbReference type="GO" id="GO:0005525">
    <property type="term" value="F:GTP binding"/>
    <property type="evidence" value="ECO:0007669"/>
    <property type="project" value="UniProtKB-KW"/>
</dbReference>
<dbReference type="GO" id="GO:0003924">
    <property type="term" value="F:GTPase activity"/>
    <property type="evidence" value="ECO:0000318"/>
    <property type="project" value="GO_Central"/>
</dbReference>
<dbReference type="GO" id="GO:0000045">
    <property type="term" value="P:autophagosome assembly"/>
    <property type="evidence" value="ECO:0000318"/>
    <property type="project" value="GO_Central"/>
</dbReference>
<dbReference type="GO" id="GO:0006886">
    <property type="term" value="P:intracellular protein transport"/>
    <property type="evidence" value="ECO:0000318"/>
    <property type="project" value="GO_Central"/>
</dbReference>
<dbReference type="CDD" id="cd01864">
    <property type="entry name" value="Rab19"/>
    <property type="match status" value="1"/>
</dbReference>
<dbReference type="FunFam" id="3.40.50.300:FF:000887">
    <property type="entry name" value="Ras-related protein Rab-19"/>
    <property type="match status" value="1"/>
</dbReference>
<dbReference type="Gene3D" id="3.40.50.300">
    <property type="entry name" value="P-loop containing nucleotide triphosphate hydrolases"/>
    <property type="match status" value="1"/>
</dbReference>
<dbReference type="InterPro" id="IPR027417">
    <property type="entry name" value="P-loop_NTPase"/>
</dbReference>
<dbReference type="InterPro" id="IPR048040">
    <property type="entry name" value="Rab19/43"/>
</dbReference>
<dbReference type="InterPro" id="IPR050209">
    <property type="entry name" value="Rab_GTPases_membrane_traffic"/>
</dbReference>
<dbReference type="InterPro" id="IPR005225">
    <property type="entry name" value="Small_GTP-bd"/>
</dbReference>
<dbReference type="InterPro" id="IPR001806">
    <property type="entry name" value="Small_GTPase"/>
</dbReference>
<dbReference type="NCBIfam" id="TIGR00231">
    <property type="entry name" value="small_GTP"/>
    <property type="match status" value="1"/>
</dbReference>
<dbReference type="PANTHER" id="PTHR47979">
    <property type="entry name" value="DRAB11-RELATED"/>
    <property type="match status" value="1"/>
</dbReference>
<dbReference type="Pfam" id="PF00071">
    <property type="entry name" value="Ras"/>
    <property type="match status" value="1"/>
</dbReference>
<dbReference type="PRINTS" id="PR00449">
    <property type="entry name" value="RASTRNSFRMNG"/>
</dbReference>
<dbReference type="SMART" id="SM00175">
    <property type="entry name" value="RAB"/>
    <property type="match status" value="1"/>
</dbReference>
<dbReference type="SMART" id="SM00176">
    <property type="entry name" value="RAN"/>
    <property type="match status" value="1"/>
</dbReference>
<dbReference type="SMART" id="SM00173">
    <property type="entry name" value="RAS"/>
    <property type="match status" value="1"/>
</dbReference>
<dbReference type="SMART" id="SM00174">
    <property type="entry name" value="RHO"/>
    <property type="match status" value="1"/>
</dbReference>
<dbReference type="SUPFAM" id="SSF52540">
    <property type="entry name" value="P-loop containing nucleoside triphosphate hydrolases"/>
    <property type="match status" value="1"/>
</dbReference>
<dbReference type="PROSITE" id="PS51419">
    <property type="entry name" value="RAB"/>
    <property type="match status" value="1"/>
</dbReference>
<organism>
    <name type="scientific">Rattus norvegicus</name>
    <name type="common">Rat</name>
    <dbReference type="NCBI Taxonomy" id="10116"/>
    <lineage>
        <taxon>Eukaryota</taxon>
        <taxon>Metazoa</taxon>
        <taxon>Chordata</taxon>
        <taxon>Craniata</taxon>
        <taxon>Vertebrata</taxon>
        <taxon>Euteleostomi</taxon>
        <taxon>Mammalia</taxon>
        <taxon>Eutheria</taxon>
        <taxon>Euarchontoglires</taxon>
        <taxon>Glires</taxon>
        <taxon>Rodentia</taxon>
        <taxon>Myomorpha</taxon>
        <taxon>Muroidea</taxon>
        <taxon>Muridae</taxon>
        <taxon>Murinae</taxon>
        <taxon>Rattus</taxon>
    </lineage>
</organism>
<reference key="1">
    <citation type="journal article" date="2004" name="Genome Res.">
        <title>The status, quality, and expansion of the NIH full-length cDNA project: the Mammalian Gene Collection (MGC).</title>
        <authorList>
            <consortium name="The MGC Project Team"/>
        </authorList>
    </citation>
    <scope>NUCLEOTIDE SEQUENCE [LARGE SCALE MRNA]</scope>
    <source>
        <tissue>Kidney</tissue>
    </source>
</reference>
<protein>
    <recommendedName>
        <fullName>Ras-related protein Rab-19</fullName>
        <ecNumber evidence="3">3.6.5.2</ecNumber>
    </recommendedName>
</protein>
<comment type="function">
    <text evidence="3">The small GTPases Rab are key regulators of intracellular membrane trafficking, from the formation of transport vesicles to their fusion with membranes. Rabs cycle between an inactive GDP-bound form and an active GTP-bound form that is able to recruit to membranes different set of downstream effectors directly responsible for vesicle formation, movement, tethering and fusion.</text>
</comment>
<comment type="catalytic activity">
    <reaction evidence="3">
        <text>GTP + H2O = GDP + phosphate + H(+)</text>
        <dbReference type="Rhea" id="RHEA:19669"/>
        <dbReference type="ChEBI" id="CHEBI:15377"/>
        <dbReference type="ChEBI" id="CHEBI:15378"/>
        <dbReference type="ChEBI" id="CHEBI:37565"/>
        <dbReference type="ChEBI" id="CHEBI:43474"/>
        <dbReference type="ChEBI" id="CHEBI:58189"/>
        <dbReference type="EC" id="3.6.5.2"/>
    </reaction>
    <physiologicalReaction direction="left-to-right" evidence="3">
        <dbReference type="Rhea" id="RHEA:19670"/>
    </physiologicalReaction>
</comment>
<comment type="cofactor">
    <cofactor evidence="3">
        <name>Mg(2+)</name>
        <dbReference type="ChEBI" id="CHEBI:18420"/>
    </cofactor>
</comment>
<comment type="activity regulation">
    <text evidence="2">Regulated by guanine nucleotide exchange factors (GEFs) which promote the exchange of bound GDP for free GTP. Regulated by GTPase activating proteins (GAPs) which increase the GTP hydrolysis activity. Inhibited by GDP dissociation inhibitors (GDIs).</text>
</comment>
<comment type="subcellular location">
    <subcellularLocation>
        <location evidence="4">Cell membrane</location>
        <topology evidence="4">Lipid-anchor</topology>
        <orientation evidence="4">Cytoplasmic side</orientation>
    </subcellularLocation>
</comment>
<comment type="domain">
    <text evidence="3">Switch 1, switch 2 and the interswitch regions are characteristic of Rab GTPases and mediate the interactions with Rab downstream effectors. The switch regions undergo conformational changes upon nucleotide binding which drives interaction with specific sets of effector proteins, with most effectors only binding to GTP-bound Rab.</text>
</comment>
<comment type="similarity">
    <text evidence="4">Belongs to the small GTPase superfamily. Rab family.</text>
</comment>
<sequence>MQFSSAARTVDENVDYLFKVILIGDSNVGKTCVVQHFKSGVYSESQQNTIGVDFTVRSLEIDGKKVKMQVWDTAGQERFRTITQSYYRSAHAAIIAYDLTRRSTFESVPHWIHEIEKYGAANLVIMLIGNKSDLWEKRHVLFEDACTLAEKYGLLAVLETSAKESRNIDEVFVLMAKELIARNSLHLYGESAQQGLPQDSSPVLVAHVPSERTHCTC</sequence>
<accession>Q5M7U5</accession>
<name>RAB19_RAT</name>
<feature type="chain" id="PRO_0000244614" description="Ras-related protein Rab-19">
    <location>
        <begin position="1"/>
        <end position="217"/>
    </location>
</feature>
<feature type="short sequence motif" description="Switch 1" evidence="3">
    <location>
        <begin position="39"/>
        <end position="54"/>
    </location>
</feature>
<feature type="short sequence motif" description="Switch 2" evidence="3">
    <location>
        <begin position="74"/>
        <end position="89"/>
    </location>
</feature>
<feature type="binding site" evidence="3">
    <location>
        <position position="26"/>
    </location>
    <ligand>
        <name>GTP</name>
        <dbReference type="ChEBI" id="CHEBI:37565"/>
    </ligand>
</feature>
<feature type="binding site" evidence="3">
    <location>
        <position position="28"/>
    </location>
    <ligand>
        <name>GTP</name>
        <dbReference type="ChEBI" id="CHEBI:37565"/>
    </ligand>
</feature>
<feature type="binding site" evidence="3">
    <location>
        <position position="29"/>
    </location>
    <ligand>
        <name>GTP</name>
        <dbReference type="ChEBI" id="CHEBI:37565"/>
    </ligand>
</feature>
<feature type="binding site" evidence="3">
    <location>
        <position position="30"/>
    </location>
    <ligand>
        <name>GTP</name>
        <dbReference type="ChEBI" id="CHEBI:37565"/>
    </ligand>
</feature>
<feature type="binding site" evidence="3">
    <location>
        <position position="31"/>
    </location>
    <ligand>
        <name>GTP</name>
        <dbReference type="ChEBI" id="CHEBI:37565"/>
    </ligand>
</feature>
<feature type="binding site" evidence="3">
    <location>
        <position position="31"/>
    </location>
    <ligand>
        <name>Mg(2+)</name>
        <dbReference type="ChEBI" id="CHEBI:18420"/>
    </ligand>
</feature>
<feature type="binding site" evidence="3">
    <location>
        <position position="32"/>
    </location>
    <ligand>
        <name>GTP</name>
        <dbReference type="ChEBI" id="CHEBI:37565"/>
    </ligand>
</feature>
<feature type="binding site" evidence="3">
    <location>
        <position position="42"/>
    </location>
    <ligand>
        <name>GTP</name>
        <dbReference type="ChEBI" id="CHEBI:37565"/>
    </ligand>
</feature>
<feature type="binding site" evidence="3">
    <location>
        <position position="43"/>
    </location>
    <ligand>
        <name>GTP</name>
        <dbReference type="ChEBI" id="CHEBI:37565"/>
    </ligand>
</feature>
<feature type="binding site" evidence="3">
    <location>
        <position position="44"/>
    </location>
    <ligand>
        <name>GTP</name>
        <dbReference type="ChEBI" id="CHEBI:37565"/>
    </ligand>
</feature>
<feature type="binding site" evidence="3">
    <location>
        <position position="45"/>
    </location>
    <ligand>
        <name>GTP</name>
        <dbReference type="ChEBI" id="CHEBI:37565"/>
    </ligand>
</feature>
<feature type="binding site" evidence="3">
    <location>
        <position position="49"/>
    </location>
    <ligand>
        <name>GTP</name>
        <dbReference type="ChEBI" id="CHEBI:37565"/>
    </ligand>
</feature>
<feature type="binding site" evidence="3">
    <location>
        <position position="49"/>
    </location>
    <ligand>
        <name>Mg(2+)</name>
        <dbReference type="ChEBI" id="CHEBI:18420"/>
    </ligand>
</feature>
<feature type="binding site" evidence="3">
    <location>
        <position position="72"/>
    </location>
    <ligand>
        <name>Mg(2+)</name>
        <dbReference type="ChEBI" id="CHEBI:18420"/>
    </ligand>
</feature>
<feature type="binding site" evidence="3">
    <location>
        <position position="75"/>
    </location>
    <ligand>
        <name>GTP</name>
        <dbReference type="ChEBI" id="CHEBI:37565"/>
    </ligand>
</feature>
<feature type="binding site" evidence="3">
    <location>
        <position position="130"/>
    </location>
    <ligand>
        <name>GTP</name>
        <dbReference type="ChEBI" id="CHEBI:37565"/>
    </ligand>
</feature>
<feature type="binding site" evidence="3">
    <location>
        <position position="131"/>
    </location>
    <ligand>
        <name>GTP</name>
        <dbReference type="ChEBI" id="CHEBI:37565"/>
    </ligand>
</feature>
<feature type="binding site" evidence="3">
    <location>
        <position position="133"/>
    </location>
    <ligand>
        <name>GTP</name>
        <dbReference type="ChEBI" id="CHEBI:37565"/>
    </ligand>
</feature>
<feature type="binding site" evidence="3">
    <location>
        <position position="161"/>
    </location>
    <ligand>
        <name>GTP</name>
        <dbReference type="ChEBI" id="CHEBI:37565"/>
    </ligand>
</feature>
<feature type="binding site" evidence="3">
    <location>
        <position position="162"/>
    </location>
    <ligand>
        <name>GTP</name>
        <dbReference type="ChEBI" id="CHEBI:37565"/>
    </ligand>
</feature>
<feature type="binding site" evidence="3">
    <location>
        <position position="163"/>
    </location>
    <ligand>
        <name>GTP</name>
        <dbReference type="ChEBI" id="CHEBI:37565"/>
    </ligand>
</feature>
<feature type="modified residue" description="Cysteine methyl ester" evidence="1">
    <location>
        <position position="217"/>
    </location>
</feature>
<feature type="lipid moiety-binding region" description="S-geranylgeranyl cysteine" evidence="1">
    <location>
        <position position="215"/>
    </location>
</feature>
<feature type="lipid moiety-binding region" description="S-geranylgeranyl cysteine" evidence="1">
    <location>
        <position position="217"/>
    </location>
</feature>
<proteinExistence type="evidence at transcript level"/>
<keyword id="KW-1003">Cell membrane</keyword>
<keyword id="KW-0342">GTP-binding</keyword>
<keyword id="KW-0378">Hydrolase</keyword>
<keyword id="KW-0449">Lipoprotein</keyword>
<keyword id="KW-0460">Magnesium</keyword>
<keyword id="KW-0472">Membrane</keyword>
<keyword id="KW-0479">Metal-binding</keyword>
<keyword id="KW-0488">Methylation</keyword>
<keyword id="KW-0547">Nucleotide-binding</keyword>
<keyword id="KW-0636">Prenylation</keyword>
<keyword id="KW-1185">Reference proteome</keyword>
<evidence type="ECO:0000250" key="1"/>
<evidence type="ECO:0000250" key="2">
    <source>
        <dbReference type="UniProtKB" id="A4D1S5"/>
    </source>
</evidence>
<evidence type="ECO:0000250" key="3">
    <source>
        <dbReference type="UniProtKB" id="Q9H0U4"/>
    </source>
</evidence>
<evidence type="ECO:0000305" key="4"/>
<evidence type="ECO:0000312" key="5">
    <source>
        <dbReference type="RGD" id="1565263"/>
    </source>
</evidence>
<gene>
    <name evidence="5" type="primary">Rab19</name>
</gene>